<organism>
    <name type="scientific">Shigella boydii serotype 18 (strain CDC 3083-94 / BS512)</name>
    <dbReference type="NCBI Taxonomy" id="344609"/>
    <lineage>
        <taxon>Bacteria</taxon>
        <taxon>Pseudomonadati</taxon>
        <taxon>Pseudomonadota</taxon>
        <taxon>Gammaproteobacteria</taxon>
        <taxon>Enterobacterales</taxon>
        <taxon>Enterobacteriaceae</taxon>
        <taxon>Shigella</taxon>
    </lineage>
</organism>
<feature type="chain" id="PRO_1000188854" description="L-ribulose-5-phosphate 4-epimerase UlaF">
    <location>
        <begin position="1"/>
        <end position="228"/>
    </location>
</feature>
<feature type="active site" description="Proton donor/acceptor" evidence="1">
    <location>
        <position position="118"/>
    </location>
</feature>
<feature type="active site" description="Proton donor/acceptor" evidence="1">
    <location>
        <position position="225"/>
    </location>
</feature>
<feature type="binding site" evidence="1">
    <location>
        <begin position="26"/>
        <end position="27"/>
    </location>
    <ligand>
        <name>substrate</name>
    </ligand>
</feature>
<feature type="binding site" evidence="1">
    <location>
        <begin position="43"/>
        <end position="44"/>
    </location>
    <ligand>
        <name>substrate</name>
    </ligand>
</feature>
<feature type="binding site" evidence="1">
    <location>
        <begin position="72"/>
        <end position="73"/>
    </location>
    <ligand>
        <name>substrate</name>
    </ligand>
</feature>
<feature type="binding site" evidence="1">
    <location>
        <position position="74"/>
    </location>
    <ligand>
        <name>Zn(2+)</name>
        <dbReference type="ChEBI" id="CHEBI:29105"/>
    </ligand>
</feature>
<feature type="binding site" evidence="1">
    <location>
        <position position="93"/>
    </location>
    <ligand>
        <name>Zn(2+)</name>
        <dbReference type="ChEBI" id="CHEBI:29105"/>
    </ligand>
</feature>
<feature type="binding site" evidence="1">
    <location>
        <position position="95"/>
    </location>
    <ligand>
        <name>Zn(2+)</name>
        <dbReference type="ChEBI" id="CHEBI:29105"/>
    </ligand>
</feature>
<feature type="binding site" evidence="1">
    <location>
        <position position="167"/>
    </location>
    <ligand>
        <name>Zn(2+)</name>
        <dbReference type="ChEBI" id="CHEBI:29105"/>
    </ligand>
</feature>
<proteinExistence type="inferred from homology"/>
<evidence type="ECO:0000255" key="1">
    <source>
        <dbReference type="HAMAP-Rule" id="MF_01952"/>
    </source>
</evidence>
<protein>
    <recommendedName>
        <fullName evidence="1">L-ribulose-5-phosphate 4-epimerase UlaF</fullName>
        <ecNumber evidence="1">5.1.3.4</ecNumber>
    </recommendedName>
    <alternativeName>
        <fullName evidence="1">L-ascorbate utilization protein F</fullName>
    </alternativeName>
    <alternativeName>
        <fullName evidence="1">Phosphoribulose isomerase</fullName>
    </alternativeName>
</protein>
<sequence>MQKLKQQVFEANMDLPRYGLVTFTWGNVSAIDRERGLVVIKPSGVAYETMKADDMVVVDMSGKVVEGKYRPSSDTATHLELYRRYPSLGGIVHTHSTHATAWAPAGLAIPALGTTHADYFFGDIPCTRGLSEEEVQGEYELNTGKVIIETLGDAEPLHTPGIVVYQHGPFAWGKDAHDAVHNAVVMEEVAKMAWIARSINPQLNHIDSFLMNKHFMRKHGPNAYYGQK</sequence>
<comment type="function">
    <text evidence="1">Catalyzes the isomerization of L-ribulose 5-phosphate to D-xylulose 5-phosphate. Is involved in the anaerobic L-ascorbate utilization.</text>
</comment>
<comment type="catalytic activity">
    <reaction evidence="1">
        <text>L-ribulose 5-phosphate = D-xylulose 5-phosphate</text>
        <dbReference type="Rhea" id="RHEA:22368"/>
        <dbReference type="ChEBI" id="CHEBI:57737"/>
        <dbReference type="ChEBI" id="CHEBI:58226"/>
        <dbReference type="EC" id="5.1.3.4"/>
    </reaction>
</comment>
<comment type="cofactor">
    <cofactor evidence="1">
        <name>Zn(2+)</name>
        <dbReference type="ChEBI" id="CHEBI:29105"/>
    </cofactor>
    <text evidence="1">Binds 1 zinc ion per subunit.</text>
</comment>
<comment type="pathway">
    <text evidence="1">Cofactor degradation; L-ascorbate degradation; D-xylulose 5-phosphate from L-ascorbate: step 4/4.</text>
</comment>
<comment type="induction">
    <text evidence="1">Induced by L-ascorbate. Repressed by UlaR.</text>
</comment>
<comment type="similarity">
    <text evidence="1">Belongs to the aldolase class II family. AraD/FucA subfamily.</text>
</comment>
<accession>B2TY70</accession>
<reference key="1">
    <citation type="submission" date="2008-05" db="EMBL/GenBank/DDBJ databases">
        <title>Complete sequence of Shigella boydii serotype 18 strain BS512.</title>
        <authorList>
            <person name="Rasko D.A."/>
            <person name="Rosovitz M."/>
            <person name="Maurelli A.T."/>
            <person name="Myers G."/>
            <person name="Seshadri R."/>
            <person name="Cer R."/>
            <person name="Jiang L."/>
            <person name="Ravel J."/>
            <person name="Sebastian Y."/>
        </authorList>
    </citation>
    <scope>NUCLEOTIDE SEQUENCE [LARGE SCALE GENOMIC DNA]</scope>
    <source>
        <strain>CDC 3083-94 / BS512</strain>
    </source>
</reference>
<gene>
    <name evidence="1" type="primary">ulaF</name>
    <name type="ordered locus">SbBS512_E4728</name>
</gene>
<dbReference type="EC" id="5.1.3.4" evidence="1"/>
<dbReference type="EMBL" id="CP001063">
    <property type="protein sequence ID" value="ACD10041.1"/>
    <property type="molecule type" value="Genomic_DNA"/>
</dbReference>
<dbReference type="RefSeq" id="WP_001170822.1">
    <property type="nucleotide sequence ID" value="NC_010658.1"/>
</dbReference>
<dbReference type="SMR" id="B2TY70"/>
<dbReference type="STRING" id="344609.SbBS512_E4728"/>
<dbReference type="KEGG" id="sbc:SbBS512_E4728"/>
<dbReference type="HOGENOM" id="CLU_006033_5_0_6"/>
<dbReference type="UniPathway" id="UPA00263">
    <property type="reaction ID" value="UER00380"/>
</dbReference>
<dbReference type="Proteomes" id="UP000001030">
    <property type="component" value="Chromosome"/>
</dbReference>
<dbReference type="GO" id="GO:0005829">
    <property type="term" value="C:cytosol"/>
    <property type="evidence" value="ECO:0007669"/>
    <property type="project" value="TreeGrafter"/>
</dbReference>
<dbReference type="GO" id="GO:0016832">
    <property type="term" value="F:aldehyde-lyase activity"/>
    <property type="evidence" value="ECO:0007669"/>
    <property type="project" value="TreeGrafter"/>
</dbReference>
<dbReference type="GO" id="GO:0008742">
    <property type="term" value="F:L-ribulose-phosphate 4-epimerase activity"/>
    <property type="evidence" value="ECO:0007669"/>
    <property type="project" value="UniProtKB-UniRule"/>
</dbReference>
<dbReference type="GO" id="GO:0008270">
    <property type="term" value="F:zinc ion binding"/>
    <property type="evidence" value="ECO:0007669"/>
    <property type="project" value="UniProtKB-UniRule"/>
</dbReference>
<dbReference type="GO" id="GO:0019854">
    <property type="term" value="P:L-ascorbic acid catabolic process"/>
    <property type="evidence" value="ECO:0007669"/>
    <property type="project" value="UniProtKB-UniRule"/>
</dbReference>
<dbReference type="GO" id="GO:0019323">
    <property type="term" value="P:pentose catabolic process"/>
    <property type="evidence" value="ECO:0007669"/>
    <property type="project" value="TreeGrafter"/>
</dbReference>
<dbReference type="CDD" id="cd00398">
    <property type="entry name" value="Aldolase_II"/>
    <property type="match status" value="1"/>
</dbReference>
<dbReference type="FunFam" id="3.40.225.10:FF:000001">
    <property type="entry name" value="L-ribulose-5-phosphate 4-epimerase UlaF"/>
    <property type="match status" value="1"/>
</dbReference>
<dbReference type="Gene3D" id="3.40.225.10">
    <property type="entry name" value="Class II aldolase/adducin N-terminal domain"/>
    <property type="match status" value="1"/>
</dbReference>
<dbReference type="HAMAP" id="MF_01952">
    <property type="entry name" value="UlaF"/>
    <property type="match status" value="1"/>
</dbReference>
<dbReference type="InterPro" id="IPR050197">
    <property type="entry name" value="Aldolase_class_II_sugar_metab"/>
</dbReference>
<dbReference type="InterPro" id="IPR001303">
    <property type="entry name" value="Aldolase_II/adducin_N"/>
</dbReference>
<dbReference type="InterPro" id="IPR036409">
    <property type="entry name" value="Aldolase_II/adducin_N_sf"/>
</dbReference>
<dbReference type="InterPro" id="IPR023499">
    <property type="entry name" value="UlaF"/>
</dbReference>
<dbReference type="NCBIfam" id="NF006047">
    <property type="entry name" value="PRK08193.1"/>
    <property type="match status" value="1"/>
</dbReference>
<dbReference type="NCBIfam" id="NF009003">
    <property type="entry name" value="PRK12348.1"/>
    <property type="match status" value="1"/>
</dbReference>
<dbReference type="PANTHER" id="PTHR22789">
    <property type="entry name" value="FUCULOSE PHOSPHATE ALDOLASE"/>
    <property type="match status" value="1"/>
</dbReference>
<dbReference type="PANTHER" id="PTHR22789:SF9">
    <property type="entry name" value="L-RIBULOSE-5-PHOSPHATE 4-EPIMERASE ULAF"/>
    <property type="match status" value="1"/>
</dbReference>
<dbReference type="Pfam" id="PF00596">
    <property type="entry name" value="Aldolase_II"/>
    <property type="match status" value="1"/>
</dbReference>
<dbReference type="SMART" id="SM01007">
    <property type="entry name" value="Aldolase_II"/>
    <property type="match status" value="1"/>
</dbReference>
<dbReference type="SUPFAM" id="SSF53639">
    <property type="entry name" value="AraD/HMP-PK domain-like"/>
    <property type="match status" value="1"/>
</dbReference>
<name>ULAF_SHIB3</name>
<keyword id="KW-0119">Carbohydrate metabolism</keyword>
<keyword id="KW-0413">Isomerase</keyword>
<keyword id="KW-0479">Metal-binding</keyword>
<keyword id="KW-1185">Reference proteome</keyword>
<keyword id="KW-0862">Zinc</keyword>